<name>RIB7_METJA</name>
<proteinExistence type="evidence at protein level"/>
<sequence>MVMVMEKKPYIISNVGMTLDGKLATINNDSRISCEEDLIRVHKIRANVDGIMVGIGTVLKDDPRLTVHKIKSDRNPVRIVVDSKLRVPLNARVLNKDAKTIIATTEDTNEEKEKKIKILEDMGVEVVKCGRGKVDLKKLMDILYDKGIKSILLEGGGTLNWGMFKEGLVDEVSVYIAPKIFGGKEAPTYVDGEGFKTVDECVKLELKNFYRLGEGIVLEFKVKK</sequence>
<dbReference type="EC" id="1.1.1.302"/>
<dbReference type="EMBL" id="L77117">
    <property type="protein sequence ID" value="AAB98665.1"/>
    <property type="molecule type" value="Genomic_DNA"/>
</dbReference>
<dbReference type="PIR" id="G64383">
    <property type="entry name" value="G64383"/>
</dbReference>
<dbReference type="PDB" id="2AZN">
    <property type="method" value="X-ray"/>
    <property type="resolution" value="2.70 A"/>
    <property type="chains" value="A/B/C/D/E/F=6-224"/>
</dbReference>
<dbReference type="PDBsum" id="2AZN"/>
<dbReference type="SMR" id="Q58085"/>
<dbReference type="FunCoup" id="Q58085">
    <property type="interactions" value="122"/>
</dbReference>
<dbReference type="STRING" id="243232.MJ_0671"/>
<dbReference type="PaxDb" id="243232-MJ_0671"/>
<dbReference type="EnsemblBacteria" id="AAB98665">
    <property type="protein sequence ID" value="AAB98665"/>
    <property type="gene ID" value="MJ_0671"/>
</dbReference>
<dbReference type="KEGG" id="mja:MJ_0671"/>
<dbReference type="eggNOG" id="arCOG01484">
    <property type="taxonomic scope" value="Archaea"/>
</dbReference>
<dbReference type="HOGENOM" id="CLU_036590_4_1_2"/>
<dbReference type="InParanoid" id="Q58085"/>
<dbReference type="PhylomeDB" id="Q58085"/>
<dbReference type="BioCyc" id="MetaCyc:MONOMER-14596"/>
<dbReference type="BRENDA" id="1.1.1.302">
    <property type="organism ID" value="3260"/>
</dbReference>
<dbReference type="UniPathway" id="UPA00275"/>
<dbReference type="EvolutionaryTrace" id="Q58085"/>
<dbReference type="Proteomes" id="UP000000805">
    <property type="component" value="Chromosome"/>
</dbReference>
<dbReference type="GO" id="GO:0051287">
    <property type="term" value="F:NAD binding"/>
    <property type="evidence" value="ECO:0000314"/>
    <property type="project" value="UniProtKB"/>
</dbReference>
<dbReference type="GO" id="GO:0050661">
    <property type="term" value="F:NADP binding"/>
    <property type="evidence" value="ECO:0000314"/>
    <property type="project" value="UniProtKB"/>
</dbReference>
<dbReference type="GO" id="GO:0016616">
    <property type="term" value="F:oxidoreductase activity, acting on the CH-OH group of donors, NAD or NADP as acceptor"/>
    <property type="evidence" value="ECO:0000314"/>
    <property type="project" value="UniProtKB"/>
</dbReference>
<dbReference type="GO" id="GO:0046983">
    <property type="term" value="F:protein dimerization activity"/>
    <property type="evidence" value="ECO:0000314"/>
    <property type="project" value="UniProtKB"/>
</dbReference>
<dbReference type="GO" id="GO:0009231">
    <property type="term" value="P:riboflavin biosynthetic process"/>
    <property type="evidence" value="ECO:0000314"/>
    <property type="project" value="UniProtKB"/>
</dbReference>
<dbReference type="FunFam" id="3.40.430.10:FF:000011">
    <property type="entry name" value="Rib7p"/>
    <property type="match status" value="1"/>
</dbReference>
<dbReference type="Gene3D" id="3.40.430.10">
    <property type="entry name" value="Dihydrofolate Reductase, subunit A"/>
    <property type="match status" value="1"/>
</dbReference>
<dbReference type="InterPro" id="IPR024072">
    <property type="entry name" value="DHFR-like_dom_sf"/>
</dbReference>
<dbReference type="InterPro" id="IPR006401">
    <property type="entry name" value="Rib_reduct_arc"/>
</dbReference>
<dbReference type="InterPro" id="IPR011549">
    <property type="entry name" value="RibD_C"/>
</dbReference>
<dbReference type="InterPro" id="IPR002734">
    <property type="entry name" value="RibDG_C"/>
</dbReference>
<dbReference type="InterPro" id="IPR050765">
    <property type="entry name" value="Riboflavin_Biosynth_HTPR"/>
</dbReference>
<dbReference type="NCBIfam" id="TIGR01508">
    <property type="entry name" value="rib_reduct_arch"/>
    <property type="match status" value="1"/>
</dbReference>
<dbReference type="NCBIfam" id="TIGR00227">
    <property type="entry name" value="ribD_Cterm"/>
    <property type="match status" value="1"/>
</dbReference>
<dbReference type="PANTHER" id="PTHR38011:SF7">
    <property type="entry name" value="2,5-DIAMINO-6-RIBOSYLAMINO-4(3H)-PYRIMIDINONE 5'-PHOSPHATE REDUCTASE"/>
    <property type="match status" value="1"/>
</dbReference>
<dbReference type="PANTHER" id="PTHR38011">
    <property type="entry name" value="DIHYDROFOLATE REDUCTASE FAMILY PROTEIN (AFU_ORTHOLOGUE AFUA_8G06820)"/>
    <property type="match status" value="1"/>
</dbReference>
<dbReference type="Pfam" id="PF01872">
    <property type="entry name" value="RibD_C"/>
    <property type="match status" value="1"/>
</dbReference>
<dbReference type="SUPFAM" id="SSF53597">
    <property type="entry name" value="Dihydrofolate reductase-like"/>
    <property type="match status" value="1"/>
</dbReference>
<accession>Q58085</accession>
<keyword id="KW-0002">3D-structure</keyword>
<keyword id="KW-0903">Direct protein sequencing</keyword>
<keyword id="KW-0520">NAD</keyword>
<keyword id="KW-0521">NADP</keyword>
<keyword id="KW-0560">Oxidoreductase</keyword>
<keyword id="KW-1185">Reference proteome</keyword>
<keyword id="KW-0686">Riboflavin biosynthesis</keyword>
<feature type="initiator methionine" description="Removed" evidence="5">
    <location>
        <position position="1"/>
    </location>
</feature>
<feature type="chain" id="PRO_0000135944" description="2,5-diamino-6-ribosylamino-4(3H)-pyrimidinone 5'-phosphate reductase">
    <location>
        <begin position="2"/>
        <end position="224"/>
    </location>
</feature>
<feature type="binding site" evidence="2">
    <location>
        <position position="16"/>
    </location>
    <ligand>
        <name>NADP(+)</name>
        <dbReference type="ChEBI" id="CHEBI:58349"/>
    </ligand>
</feature>
<feature type="binding site" evidence="2">
    <location>
        <position position="57"/>
    </location>
    <ligand>
        <name>NADP(+)</name>
        <dbReference type="ChEBI" id="CHEBI:58349"/>
    </ligand>
</feature>
<feature type="binding site" evidence="2">
    <location>
        <position position="61"/>
    </location>
    <ligand>
        <name>NADP(+)</name>
        <dbReference type="ChEBI" id="CHEBI:58349"/>
    </ligand>
</feature>
<feature type="binding site" evidence="2">
    <location>
        <begin position="83"/>
        <end position="86"/>
    </location>
    <ligand>
        <name>NADP(+)</name>
        <dbReference type="ChEBI" id="CHEBI:58349"/>
    </ligand>
</feature>
<feature type="binding site" evidence="2">
    <location>
        <position position="134"/>
    </location>
    <ligand>
        <name>NADP(+)</name>
        <dbReference type="ChEBI" id="CHEBI:58349"/>
    </ligand>
</feature>
<feature type="binding site" evidence="2">
    <location>
        <begin position="156"/>
        <end position="159"/>
    </location>
    <ligand>
        <name>NADP(+)</name>
        <dbReference type="ChEBI" id="CHEBI:58349"/>
    </ligand>
</feature>
<feature type="strand" evidence="6">
    <location>
        <begin position="10"/>
        <end position="18"/>
    </location>
</feature>
<feature type="strand" evidence="6">
    <location>
        <begin position="22"/>
        <end position="24"/>
    </location>
</feature>
<feature type="helix" evidence="6">
    <location>
        <begin position="35"/>
        <end position="46"/>
    </location>
</feature>
<feature type="strand" evidence="6">
    <location>
        <begin position="48"/>
        <end position="54"/>
    </location>
</feature>
<feature type="helix" evidence="6">
    <location>
        <begin position="55"/>
        <end position="61"/>
    </location>
</feature>
<feature type="strand" evidence="6">
    <location>
        <begin position="77"/>
        <end position="81"/>
    </location>
</feature>
<feature type="helix" evidence="6">
    <location>
        <begin position="92"/>
        <end position="94"/>
    </location>
</feature>
<feature type="strand" evidence="6">
    <location>
        <begin position="100"/>
        <end position="104"/>
    </location>
</feature>
<feature type="helix" evidence="6">
    <location>
        <begin position="110"/>
        <end position="121"/>
    </location>
</feature>
<feature type="strand" evidence="6">
    <location>
        <begin position="125"/>
        <end position="128"/>
    </location>
</feature>
<feature type="strand" evidence="6">
    <location>
        <begin position="131"/>
        <end position="133"/>
    </location>
</feature>
<feature type="helix" evidence="6">
    <location>
        <begin position="136"/>
        <end position="145"/>
    </location>
</feature>
<feature type="strand" evidence="6">
    <location>
        <begin position="150"/>
        <end position="155"/>
    </location>
</feature>
<feature type="helix" evidence="6">
    <location>
        <begin position="157"/>
        <end position="165"/>
    </location>
</feature>
<feature type="strand" evidence="6">
    <location>
        <begin position="171"/>
        <end position="178"/>
    </location>
</feature>
<feature type="strand" evidence="6">
    <location>
        <begin position="188"/>
        <end position="190"/>
    </location>
</feature>
<feature type="helix" evidence="6">
    <location>
        <begin position="198"/>
        <end position="200"/>
    </location>
</feature>
<feature type="strand" evidence="6">
    <location>
        <begin position="204"/>
        <end position="212"/>
    </location>
</feature>
<feature type="strand" evidence="6">
    <location>
        <begin position="215"/>
        <end position="222"/>
    </location>
</feature>
<evidence type="ECO:0000269" key="1">
    <source>
    </source>
</evidence>
<evidence type="ECO:0000269" key="2">
    <source>
    </source>
</evidence>
<evidence type="ECO:0000269" key="3">
    <source>
    </source>
</evidence>
<evidence type="ECO:0000305" key="4"/>
<evidence type="ECO:0000305" key="5">
    <source>
    </source>
</evidence>
<evidence type="ECO:0007829" key="6">
    <source>
        <dbReference type="PDB" id="2AZN"/>
    </source>
</evidence>
<organism>
    <name type="scientific">Methanocaldococcus jannaschii (strain ATCC 43067 / DSM 2661 / JAL-1 / JCM 10045 / NBRC 100440)</name>
    <name type="common">Methanococcus jannaschii</name>
    <dbReference type="NCBI Taxonomy" id="243232"/>
    <lineage>
        <taxon>Archaea</taxon>
        <taxon>Methanobacteriati</taxon>
        <taxon>Methanobacteriota</taxon>
        <taxon>Methanomada group</taxon>
        <taxon>Methanococci</taxon>
        <taxon>Methanococcales</taxon>
        <taxon>Methanocaldococcaceae</taxon>
        <taxon>Methanocaldococcus</taxon>
    </lineage>
</organism>
<comment type="function">
    <text evidence="1 3">Catalyzes an early step in riboflavin biosynthesis, the NAD(P)H-dependent reduction of the ribose side chain of 2,5-diamino-6-ribosylamino-4(3H)-pyrimidinone 5'-phosphate, yielding 2,5-diamino-6-ribitylamino-4(3H)-pyrimidinone 5'-phosphate. The beta anomer is the authentic substrate, and the alpha anomer can serve as substrate subsequent to spontaneous anomerization. NADPH and NADH function equally well as the reductants. Does not catalyze the reduction of 5-amino-6-(5-phospho-D-ribosylamino)uracil to 5-amino-6-(5-phospho-D-ribitylamino)uracil.</text>
</comment>
<comment type="catalytic activity">
    <reaction evidence="1 2 3">
        <text>2,5-diamino-6-(1-D-ribitylamino)pyrimidin-4(3H)-one 5'-phosphate + NADP(+) = 2,5-diamino-6-(1-D-ribosylamino)pyrimidin-4(3H)-one 5'-phosphate + NADPH + H(+)</text>
        <dbReference type="Rhea" id="RHEA:27278"/>
        <dbReference type="ChEBI" id="CHEBI:15378"/>
        <dbReference type="ChEBI" id="CHEBI:57783"/>
        <dbReference type="ChEBI" id="CHEBI:58349"/>
        <dbReference type="ChEBI" id="CHEBI:58890"/>
        <dbReference type="ChEBI" id="CHEBI:59545"/>
        <dbReference type="EC" id="1.1.1.302"/>
    </reaction>
</comment>
<comment type="catalytic activity">
    <reaction evidence="1 2 3">
        <text>2,5-diamino-6-(1-D-ribitylamino)pyrimidin-4(3H)-one 5'-phosphate + NAD(+) = 2,5-diamino-6-(1-D-ribosylamino)pyrimidin-4(3H)-one 5'-phosphate + NADH + H(+)</text>
        <dbReference type="Rhea" id="RHEA:27274"/>
        <dbReference type="ChEBI" id="CHEBI:15378"/>
        <dbReference type="ChEBI" id="CHEBI:57540"/>
        <dbReference type="ChEBI" id="CHEBI:57945"/>
        <dbReference type="ChEBI" id="CHEBI:58890"/>
        <dbReference type="ChEBI" id="CHEBI:59545"/>
        <dbReference type="EC" id="1.1.1.302"/>
    </reaction>
</comment>
<comment type="pathway">
    <text>Cofactor biosynthesis; riboflavin biosynthesis.</text>
</comment>
<comment type="subunit">
    <text evidence="2">Homodimer.</text>
</comment>
<comment type="mass spectrometry"/>
<comment type="miscellaneous">
    <text>The protein sequence in PubMed:16730025 comes from protein expressed and processed in E.coli.</text>
</comment>
<comment type="miscellaneous">
    <text>Using chirally deuterated NADPH, the enzyme was shown to be A-type reductase catalyzing the transfer of deuterium from the 4(R) position of NADPH to the 1' (S) position of the substrate.</text>
</comment>
<comment type="similarity">
    <text evidence="4">Belongs to the HTP reductase family.</text>
</comment>
<gene>
    <name type="primary">arfC</name>
    <name type="ordered locus">MJ0671</name>
</gene>
<reference key="1">
    <citation type="journal article" date="1996" name="Science">
        <title>Complete genome sequence of the methanogenic archaeon, Methanococcus jannaschii.</title>
        <authorList>
            <person name="Bult C.J."/>
            <person name="White O."/>
            <person name="Olsen G.J."/>
            <person name="Zhou L."/>
            <person name="Fleischmann R.D."/>
            <person name="Sutton G.G."/>
            <person name="Blake J.A."/>
            <person name="FitzGerald L.M."/>
            <person name="Clayton R.A."/>
            <person name="Gocayne J.D."/>
            <person name="Kerlavage A.R."/>
            <person name="Dougherty B.A."/>
            <person name="Tomb J.-F."/>
            <person name="Adams M.D."/>
            <person name="Reich C.I."/>
            <person name="Overbeek R."/>
            <person name="Kirkness E.F."/>
            <person name="Weinstock K.G."/>
            <person name="Merrick J.M."/>
            <person name="Glodek A."/>
            <person name="Scott J.L."/>
            <person name="Geoghagen N.S.M."/>
            <person name="Weidman J.F."/>
            <person name="Fuhrmann J.L."/>
            <person name="Nguyen D."/>
            <person name="Utterback T.R."/>
            <person name="Kelley J.M."/>
            <person name="Peterson J.D."/>
            <person name="Sadow P.W."/>
            <person name="Hanna M.C."/>
            <person name="Cotton M.D."/>
            <person name="Roberts K.M."/>
            <person name="Hurst M.A."/>
            <person name="Kaine B.P."/>
            <person name="Borodovsky M."/>
            <person name="Klenk H.-P."/>
            <person name="Fraser C.M."/>
            <person name="Smith H.O."/>
            <person name="Woese C.R."/>
            <person name="Venter J.C."/>
        </authorList>
    </citation>
    <scope>NUCLEOTIDE SEQUENCE [LARGE SCALE GENOMIC DNA]</scope>
    <source>
        <strain>ATCC 43067 / DSM 2661 / JAL-1 / JCM 10045 / NBRC 100440</strain>
    </source>
</reference>
<reference key="2">
    <citation type="journal article" date="2002" name="J. Bacteriol.">
        <title>The pyrimidine nucleotide reductase step in riboflavin and F(420) biosynthesis in archaea proceeds by the eukaryotic route to riboflavin.</title>
        <authorList>
            <person name="Graupner M."/>
            <person name="Xu H."/>
            <person name="White R.H."/>
        </authorList>
    </citation>
    <scope>FUNCTION</scope>
    <scope>CATALYTIC ACTIVITY</scope>
    <scope>SUBSTRATE SPECIFICITY</scope>
</reference>
<reference key="3">
    <citation type="journal article" date="2008" name="FEBS J.">
        <title>2,5-diamino-6-ribitylamino-4(3H)-pyrimidinone 5'-phosphate synthases of fungi and archaea.</title>
        <authorList>
            <person name="Romisch-Margl W."/>
            <person name="Eisenreich W."/>
            <person name="Haase I."/>
            <person name="Bacher A."/>
            <person name="Fischer M."/>
        </authorList>
    </citation>
    <scope>FUNCTION</scope>
    <scope>CATALYTIC ACTIVITY</scope>
    <scope>REACTION STEREOSPECIFICITY</scope>
</reference>
<reference key="4">
    <citation type="journal article" date="2006" name="J. Mol. Biol.">
        <title>Biosynthesis of riboflavin: structure and properties of 2,5-diamino-6-ribosylamino-4(3H)-pyrimidinone 5'-phosphate reductase of Methanocaldococcus jannaschii.</title>
        <authorList>
            <person name="Chatwell L."/>
            <person name="Krojer T."/>
            <person name="Fidler A."/>
            <person name="Romisch W."/>
            <person name="Eisenreich W."/>
            <person name="Bacher A."/>
            <person name="Huber R."/>
            <person name="Fischer M."/>
        </authorList>
    </citation>
    <scope>X-RAY CRYSTALLOGRAPHY (2.7 ANGSTROMS) OF 6-224 IN COMPLEX WITH NADP</scope>
    <scope>PROTEIN SEQUENCE OF 2-11</scope>
    <scope>CATALYTIC ACTIVITY</scope>
    <scope>MASS SPECTROMETRY</scope>
    <scope>SUBUNIT</scope>
    <scope>REACTION MECHANISM</scope>
</reference>
<protein>
    <recommendedName>
        <fullName>2,5-diamino-6-ribosylamino-4(3H)-pyrimidinone 5'-phosphate reductase</fullName>
        <shortName>DAROPP reductase</shortName>
        <shortName>DARP reductase</shortName>
        <ecNumber>1.1.1.302</ecNumber>
    </recommendedName>
    <alternativeName>
        <fullName>2,5-diamino-6-(5-phospho-D-ribosylamino)pyrimidin-4(3H)-one reductase</fullName>
    </alternativeName>
    <alternativeName>
        <fullName>2,5-diamino-6-ribitylamino-4(3H)-pyrimidinone 5'-phosphate synthase</fullName>
        <shortName>DARIPP synthase</shortName>
    </alternativeName>
    <alternativeName>
        <fullName>MjaRED</fullName>
    </alternativeName>
</protein>